<evidence type="ECO:0000250" key="1">
    <source>
        <dbReference type="UniProtKB" id="Q6WAY2"/>
    </source>
</evidence>
<evidence type="ECO:0000250" key="2">
    <source>
        <dbReference type="UniProtKB" id="Q8BFZ2"/>
    </source>
</evidence>
<evidence type="ECO:0000255" key="3"/>
<evidence type="ECO:0000303" key="4">
    <source>
    </source>
</evidence>
<evidence type="ECO:0000303" key="5">
    <source ref="2"/>
</evidence>
<evidence type="ECO:0000305" key="6"/>
<evidence type="ECO:0000305" key="7">
    <source>
    </source>
</evidence>
<evidence type="ECO:0000312" key="8">
    <source>
        <dbReference type="HGNC" id="HGNC:25993"/>
    </source>
</evidence>
<organism>
    <name type="scientific">Homo sapiens</name>
    <name type="common">Human</name>
    <dbReference type="NCBI Taxonomy" id="9606"/>
    <lineage>
        <taxon>Eukaryota</taxon>
        <taxon>Metazoa</taxon>
        <taxon>Chordata</taxon>
        <taxon>Craniata</taxon>
        <taxon>Vertebrata</taxon>
        <taxon>Euteleostomi</taxon>
        <taxon>Mammalia</taxon>
        <taxon>Eutheria</taxon>
        <taxon>Euarchontoglires</taxon>
        <taxon>Primates</taxon>
        <taxon>Haplorrhini</taxon>
        <taxon>Catarrhini</taxon>
        <taxon>Hominidae</taxon>
        <taxon>Homo</taxon>
    </lineage>
</organism>
<accession>Q8TBJ4</accession>
<accession>Q5VX23</accession>
<accession>Q9NXE2</accession>
<name>PLPR1_HUMAN</name>
<keyword id="KW-1003">Cell membrane</keyword>
<keyword id="KW-0966">Cell projection</keyword>
<keyword id="KW-0325">Glycoprotein</keyword>
<keyword id="KW-0472">Membrane</keyword>
<keyword id="KW-0597">Phosphoprotein</keyword>
<keyword id="KW-1267">Proteomics identification</keyword>
<keyword id="KW-1185">Reference proteome</keyword>
<keyword id="KW-0812">Transmembrane</keyword>
<keyword id="KW-1133">Transmembrane helix</keyword>
<dbReference type="EMBL" id="AY337718">
    <property type="protein sequence ID" value="AAQ73539.1"/>
    <property type="molecule type" value="mRNA"/>
</dbReference>
<dbReference type="EMBL" id="AY304515">
    <property type="protein sequence ID" value="AAP72152.1"/>
    <property type="molecule type" value="mRNA"/>
</dbReference>
<dbReference type="EMBL" id="AK000307">
    <property type="protein sequence ID" value="BAA91072.1"/>
    <property type="molecule type" value="mRNA"/>
</dbReference>
<dbReference type="EMBL" id="AL359893">
    <property type="status" value="NOT_ANNOTATED_CDS"/>
    <property type="molecule type" value="Genomic_DNA"/>
</dbReference>
<dbReference type="EMBL" id="AL161631">
    <property type="status" value="NOT_ANNOTATED_CDS"/>
    <property type="molecule type" value="Genomic_DNA"/>
</dbReference>
<dbReference type="EMBL" id="CH471105">
    <property type="protein sequence ID" value="EAW58938.1"/>
    <property type="molecule type" value="Genomic_DNA"/>
</dbReference>
<dbReference type="EMBL" id="BC022465">
    <property type="protein sequence ID" value="AAH22465.1"/>
    <property type="molecule type" value="mRNA"/>
</dbReference>
<dbReference type="CCDS" id="CCDS6751.1"/>
<dbReference type="RefSeq" id="NP_060223.2">
    <property type="nucleotide sequence ID" value="NM_017753.2"/>
</dbReference>
<dbReference type="RefSeq" id="NP_997182.1">
    <property type="nucleotide sequence ID" value="NM_207299.2"/>
</dbReference>
<dbReference type="BioGRID" id="120234">
    <property type="interactions" value="19"/>
</dbReference>
<dbReference type="FunCoup" id="Q8TBJ4">
    <property type="interactions" value="231"/>
</dbReference>
<dbReference type="IntAct" id="Q8TBJ4">
    <property type="interactions" value="25"/>
</dbReference>
<dbReference type="STRING" id="9606.ENSP00000364008"/>
<dbReference type="DEPOD" id="PLPPR1"/>
<dbReference type="GlyCosmos" id="Q8TBJ4">
    <property type="glycosylation" value="3 sites, No reported glycans"/>
</dbReference>
<dbReference type="GlyGen" id="Q8TBJ4">
    <property type="glycosylation" value="3 sites"/>
</dbReference>
<dbReference type="iPTMnet" id="Q8TBJ4"/>
<dbReference type="PhosphoSitePlus" id="Q8TBJ4"/>
<dbReference type="BioMuta" id="PLPPR1"/>
<dbReference type="DMDM" id="74751381"/>
<dbReference type="MassIVE" id="Q8TBJ4"/>
<dbReference type="PaxDb" id="9606-ENSP00000364008"/>
<dbReference type="PeptideAtlas" id="Q8TBJ4"/>
<dbReference type="ProteomicsDB" id="74019"/>
<dbReference type="ABCD" id="Q8TBJ4">
    <property type="antibodies" value="3 sequenced antibodies"/>
</dbReference>
<dbReference type="Antibodypedia" id="14633">
    <property type="antibodies" value="41 antibodies from 9 providers"/>
</dbReference>
<dbReference type="DNASU" id="54886"/>
<dbReference type="Ensembl" id="ENST00000374874.8">
    <property type="protein sequence ID" value="ENSP00000364008.3"/>
    <property type="gene ID" value="ENSG00000148123.15"/>
</dbReference>
<dbReference type="Ensembl" id="ENST00000395056.2">
    <property type="protein sequence ID" value="ENSP00000378496.1"/>
    <property type="gene ID" value="ENSG00000148123.15"/>
</dbReference>
<dbReference type="Ensembl" id="ENST00000611695.4">
    <property type="protein sequence ID" value="ENSP00000478338.1"/>
    <property type="gene ID" value="ENSG00000276539.4"/>
</dbReference>
<dbReference type="Ensembl" id="ENST00000614834.2">
    <property type="protein sequence ID" value="ENSP00000477959.1"/>
    <property type="gene ID" value="ENSG00000276539.4"/>
</dbReference>
<dbReference type="GeneID" id="54886"/>
<dbReference type="KEGG" id="hsa:54886"/>
<dbReference type="MANE-Select" id="ENST00000374874.8">
    <property type="protein sequence ID" value="ENSP00000364008.3"/>
    <property type="RefSeq nucleotide sequence ID" value="NM_207299.2"/>
    <property type="RefSeq protein sequence ID" value="NP_997182.1"/>
</dbReference>
<dbReference type="UCSC" id="uc004bbb.4">
    <property type="organism name" value="human"/>
</dbReference>
<dbReference type="AGR" id="HGNC:25993"/>
<dbReference type="CTD" id="54886"/>
<dbReference type="DisGeNET" id="54886"/>
<dbReference type="GeneCards" id="PLPPR1"/>
<dbReference type="HGNC" id="HGNC:25993">
    <property type="gene designation" value="PLPPR1"/>
</dbReference>
<dbReference type="HPA" id="ENSG00000148123">
    <property type="expression patterns" value="Group enriched (brain, kidney)"/>
</dbReference>
<dbReference type="MIM" id="619590">
    <property type="type" value="gene"/>
</dbReference>
<dbReference type="neXtProt" id="NX_Q8TBJ4"/>
<dbReference type="OpenTargets" id="ENSG00000148123"/>
<dbReference type="VEuPathDB" id="HostDB:ENSG00000148123"/>
<dbReference type="eggNOG" id="KOG3030">
    <property type="taxonomic scope" value="Eukaryota"/>
</dbReference>
<dbReference type="GeneTree" id="ENSGT00940000158875"/>
<dbReference type="HOGENOM" id="CLU_021458_1_0_1"/>
<dbReference type="InParanoid" id="Q8TBJ4"/>
<dbReference type="OMA" id="CRAHHEF"/>
<dbReference type="OrthoDB" id="10030083at2759"/>
<dbReference type="PAN-GO" id="Q8TBJ4">
    <property type="GO annotations" value="6 GO annotations based on evolutionary models"/>
</dbReference>
<dbReference type="PhylomeDB" id="Q8TBJ4"/>
<dbReference type="BRENDA" id="3.1.3.4">
    <property type="organism ID" value="2681"/>
</dbReference>
<dbReference type="PathwayCommons" id="Q8TBJ4"/>
<dbReference type="Reactome" id="R-HSA-419408">
    <property type="pathway name" value="Lysosphingolipid and LPA receptors"/>
</dbReference>
<dbReference type="SignaLink" id="Q8TBJ4"/>
<dbReference type="SIGNOR" id="Q8TBJ4"/>
<dbReference type="BioGRID-ORCS" id="54886">
    <property type="hits" value="14 hits in 1087 CRISPR screens"/>
</dbReference>
<dbReference type="ChiTaRS" id="PLPPR1">
    <property type="organism name" value="human"/>
</dbReference>
<dbReference type="GenomeRNAi" id="54886"/>
<dbReference type="Pharos" id="Q8TBJ4">
    <property type="development level" value="Tdark"/>
</dbReference>
<dbReference type="PRO" id="PR:Q8TBJ4"/>
<dbReference type="Proteomes" id="UP000005640">
    <property type="component" value="Chromosome 9"/>
</dbReference>
<dbReference type="RNAct" id="Q8TBJ4">
    <property type="molecule type" value="protein"/>
</dbReference>
<dbReference type="Bgee" id="ENSG00000148123">
    <property type="expression patterns" value="Expressed in cortical plate and 77 other cell types or tissues"/>
</dbReference>
<dbReference type="ExpressionAtlas" id="Q8TBJ4">
    <property type="expression patterns" value="baseline and differential"/>
</dbReference>
<dbReference type="GO" id="GO:0043005">
    <property type="term" value="C:neuron projection"/>
    <property type="evidence" value="ECO:0000250"/>
    <property type="project" value="UniProtKB"/>
</dbReference>
<dbReference type="GO" id="GO:0005654">
    <property type="term" value="C:nucleoplasm"/>
    <property type="evidence" value="ECO:0000314"/>
    <property type="project" value="HPA"/>
</dbReference>
<dbReference type="GO" id="GO:0005886">
    <property type="term" value="C:plasma membrane"/>
    <property type="evidence" value="ECO:0000250"/>
    <property type="project" value="UniProtKB"/>
</dbReference>
<dbReference type="GO" id="GO:0008195">
    <property type="term" value="F:phosphatidate phosphatase activity"/>
    <property type="evidence" value="ECO:0000318"/>
    <property type="project" value="GO_Central"/>
</dbReference>
<dbReference type="GO" id="GO:0007399">
    <property type="term" value="P:nervous system development"/>
    <property type="evidence" value="ECO:0000250"/>
    <property type="project" value="UniProtKB"/>
</dbReference>
<dbReference type="GO" id="GO:0046839">
    <property type="term" value="P:phospholipid dephosphorylation"/>
    <property type="evidence" value="ECO:0000318"/>
    <property type="project" value="GO_Central"/>
</dbReference>
<dbReference type="GO" id="GO:0006644">
    <property type="term" value="P:phospholipid metabolic process"/>
    <property type="evidence" value="ECO:0000318"/>
    <property type="project" value="GO_Central"/>
</dbReference>
<dbReference type="GO" id="GO:0007165">
    <property type="term" value="P:signal transduction"/>
    <property type="evidence" value="ECO:0000318"/>
    <property type="project" value="GO_Central"/>
</dbReference>
<dbReference type="CDD" id="cd03384">
    <property type="entry name" value="PAP2_wunen"/>
    <property type="match status" value="1"/>
</dbReference>
<dbReference type="FunFam" id="1.20.144.10:FF:000005">
    <property type="entry name" value="phospholipid phosphatase-related protein type 1"/>
    <property type="match status" value="1"/>
</dbReference>
<dbReference type="Gene3D" id="1.20.144.10">
    <property type="entry name" value="Phosphatidic acid phosphatase type 2/haloperoxidase"/>
    <property type="match status" value="1"/>
</dbReference>
<dbReference type="InterPro" id="IPR036938">
    <property type="entry name" value="P_Acid_Pase_2/haloperoxi_sf"/>
</dbReference>
<dbReference type="InterPro" id="IPR000326">
    <property type="entry name" value="P_Acid_Pase_2/haloperoxidase"/>
</dbReference>
<dbReference type="InterPro" id="IPR043216">
    <property type="entry name" value="PA_PP_rel"/>
</dbReference>
<dbReference type="PANTHER" id="PTHR10165">
    <property type="entry name" value="LIPID PHOSPHATE PHOSPHATASE"/>
    <property type="match status" value="1"/>
</dbReference>
<dbReference type="PANTHER" id="PTHR10165:SF41">
    <property type="entry name" value="PHOSPHOLIPID PHOSPHATASE-RELATED PROTEIN TYPE 1"/>
    <property type="match status" value="1"/>
</dbReference>
<dbReference type="Pfam" id="PF01569">
    <property type="entry name" value="PAP2"/>
    <property type="match status" value="1"/>
</dbReference>
<dbReference type="SMART" id="SM00014">
    <property type="entry name" value="acidPPc"/>
    <property type="match status" value="1"/>
</dbReference>
<dbReference type="SUPFAM" id="SSF48317">
    <property type="entry name" value="Acid phosphatase/Vanadium-dependent haloperoxidase"/>
    <property type="match status" value="1"/>
</dbReference>
<protein>
    <recommendedName>
        <fullName evidence="6">Phospholipid phosphatase-related protein type 1</fullName>
    </recommendedName>
    <alternativeName>
        <fullName evidence="1">Inactive 2-lysophosphatidate phosphatase PLPPR1</fullName>
    </alternativeName>
    <alternativeName>
        <fullName evidence="5">Lipid phosphate phosphatase-related protein type 1</fullName>
    </alternativeName>
    <alternativeName>
        <fullName evidence="7">Plasticity-related gene 3 protein</fullName>
        <shortName evidence="4">PRG-3</shortName>
    </alternativeName>
</protein>
<sequence>MAVGNNTQRSYSIIPCFIFVELVIMAGTVLLAYYFECTDTFQVHIQGFFCQDGDLMKPYPGTEEESFITPLVLYCVLAATPTAIIFIGEISMYFIKSTRESLIAQEKTILTGECCYLNPLLRRIIRFTGVFAFGLFATDIFVNAGQVVTGHLTPYFLTVCKPNYTSADCQAHHQFINNGNICTGDLEVIEKARRSFPSKHAALSIYSALYATMYITSTIKTKSSRLAKPVLCLGTLCTAFLTGLNRVSEYRNHCSDVIAGFILGTAVALFLGMCVVHNFKGTQGSPSKPKPEDPRGVPLMAFPRIESPLETLSAQNHSASMTEVT</sequence>
<feature type="chain" id="PRO_0000317532" description="Phospholipid phosphatase-related protein type 1">
    <location>
        <begin position="1"/>
        <end position="325"/>
    </location>
</feature>
<feature type="transmembrane region" description="Helical" evidence="3">
    <location>
        <begin position="13"/>
        <end position="33"/>
    </location>
</feature>
<feature type="transmembrane region" description="Helical" evidence="3">
    <location>
        <begin position="67"/>
        <end position="87"/>
    </location>
</feature>
<feature type="transmembrane region" description="Helical" evidence="3">
    <location>
        <begin position="127"/>
        <end position="147"/>
    </location>
</feature>
<feature type="transmembrane region" description="Helical" evidence="3">
    <location>
        <begin position="201"/>
        <end position="218"/>
    </location>
</feature>
<feature type="transmembrane region" description="Helical" evidence="3">
    <location>
        <begin position="230"/>
        <end position="247"/>
    </location>
</feature>
<feature type="transmembrane region" description="Helical" evidence="3">
    <location>
        <begin position="257"/>
        <end position="277"/>
    </location>
</feature>
<feature type="modified residue" description="Phosphoserine" evidence="2">
    <location>
        <position position="307"/>
    </location>
</feature>
<feature type="glycosylation site" description="N-linked (GlcNAc...) asparagine" evidence="3">
    <location>
        <position position="5"/>
    </location>
</feature>
<feature type="glycosylation site" description="N-linked (GlcNAc...) asparagine" evidence="3">
    <location>
        <position position="163"/>
    </location>
</feature>
<feature type="glycosylation site" description="N-linked (GlcNAc...) asparagine" evidence="3">
    <location>
        <position position="316"/>
    </location>
</feature>
<feature type="sequence conflict" description="In Ref. 3; BAA91072." evidence="6" ref="3">
    <original>Q</original>
    <variation>R</variation>
    <location>
        <position position="105"/>
    </location>
</feature>
<comment type="function">
    <text evidence="1">May play a role in neurite outgrowth and neurogenesis.</text>
</comment>
<comment type="interaction">
    <interactant intactId="EBI-18063495">
        <id>Q8TBJ4</id>
    </interactant>
    <interactant intactId="EBI-12275524">
        <id>P23560-2</id>
        <label>BDNF</label>
    </interactant>
    <organismsDiffer>false</organismsDiffer>
    <experiments>3</experiments>
</comment>
<comment type="interaction">
    <interactant intactId="EBI-18063495">
        <id>Q8TBJ4</id>
    </interactant>
    <interactant intactId="EBI-747754">
        <id>P28799</id>
        <label>GRN</label>
    </interactant>
    <organismsDiffer>false</organismsDiffer>
    <experiments>3</experiments>
</comment>
<comment type="interaction">
    <interactant intactId="EBI-18063495">
        <id>Q8TBJ4</id>
    </interactant>
    <interactant intactId="EBI-10975473">
        <id>O60333-2</id>
        <label>KIF1B</label>
    </interactant>
    <organismsDiffer>false</organismsDiffer>
    <experiments>3</experiments>
</comment>
<comment type="interaction">
    <interactant intactId="EBI-18063495">
        <id>Q8TBJ4</id>
    </interactant>
    <interactant intactId="EBI-15672507">
        <id>O15243</id>
        <label>LEPROT</label>
    </interactant>
    <organismsDiffer>false</organismsDiffer>
    <experiments>3</experiments>
</comment>
<comment type="interaction">
    <interactant intactId="EBI-18063495">
        <id>Q8TBJ4</id>
    </interactant>
    <interactant intactId="EBI-716404">
        <id>P16284</id>
        <label>PECAM1</label>
    </interactant>
    <organismsDiffer>false</organismsDiffer>
    <experiments>3</experiments>
</comment>
<comment type="interaction">
    <interactant intactId="EBI-18063495">
        <id>Q8TBJ4</id>
    </interactant>
    <interactant intactId="EBI-988601">
        <id>O43933</id>
        <label>PEX1</label>
    </interactant>
    <organismsDiffer>false</organismsDiffer>
    <experiments>3</experiments>
</comment>
<comment type="interaction">
    <interactant intactId="EBI-18063495">
        <id>Q8TBJ4</id>
    </interactant>
    <interactant intactId="EBI-692836">
        <id>P26678</id>
        <label>PLN</label>
    </interactant>
    <organismsDiffer>false</organismsDiffer>
    <experiments>3</experiments>
</comment>
<comment type="interaction">
    <interactant intactId="EBI-18063495">
        <id>Q8TBJ4</id>
    </interactant>
    <interactant intactId="EBI-749195">
        <id>P60891</id>
        <label>PRPS1</label>
    </interactant>
    <organismsDiffer>false</organismsDiffer>
    <experiments>3</experiments>
</comment>
<comment type="interaction">
    <interactant intactId="EBI-18063495">
        <id>Q8TBJ4</id>
    </interactant>
    <interactant intactId="EBI-746453">
        <id>P54725</id>
        <label>RAD23A</label>
    </interactant>
    <organismsDiffer>false</organismsDiffer>
    <experiments>3</experiments>
</comment>
<comment type="interaction">
    <interactant intactId="EBI-18063495">
        <id>Q8TBJ4</id>
    </interactant>
    <interactant intactId="EBI-10329948">
        <id>Q9Y6X1</id>
        <label>SERP1</label>
    </interactant>
    <organismsDiffer>false</organismsDiffer>
    <experiments>3</experiments>
</comment>
<comment type="interaction">
    <interactant intactId="EBI-18063495">
        <id>Q8TBJ4</id>
    </interactant>
    <interactant intactId="EBI-350723">
        <id>P50454</id>
        <label>SERPINH1</label>
    </interactant>
    <organismsDiffer>false</organismsDiffer>
    <experiments>3</experiments>
</comment>
<comment type="interaction">
    <interactant intactId="EBI-18063495">
        <id>Q8TBJ4</id>
    </interactant>
    <interactant intactId="EBI-8644112">
        <id>Q9BRI3</id>
        <label>SLC30A2</label>
    </interactant>
    <organismsDiffer>false</organismsDiffer>
    <experiments>3</experiments>
</comment>
<comment type="interaction">
    <interactant intactId="EBI-18063495">
        <id>Q8TBJ4</id>
    </interactant>
    <interactant intactId="EBI-296151">
        <id>P37173</id>
        <label>TGFBR2</label>
    </interactant>
    <organismsDiffer>false</organismsDiffer>
    <experiments>3</experiments>
</comment>
<comment type="interaction">
    <interactant intactId="EBI-18063495">
        <id>Q8TBJ4</id>
    </interactant>
    <interactant intactId="EBI-11724433">
        <id>Q6ZT21</id>
        <label>TMPPE</label>
    </interactant>
    <organismsDiffer>false</organismsDiffer>
    <experiments>3</experiments>
</comment>
<comment type="interaction">
    <interactant intactId="EBI-18063495">
        <id>Q8TBJ4</id>
    </interactant>
    <interactant intactId="EBI-720609">
        <id>O76024</id>
        <label>WFS1</label>
    </interactant>
    <organismsDiffer>false</organismsDiffer>
    <experiments>3</experiments>
</comment>
<comment type="subcellular location">
    <subcellularLocation>
        <location evidence="1">Cell membrane</location>
        <topology evidence="3">Multi-pass membrane protein</topology>
    </subcellularLocation>
    <subcellularLocation>
        <location evidence="1">Cell projection</location>
        <location evidence="1">Neuron projection</location>
    </subcellularLocation>
</comment>
<comment type="similarity">
    <text evidence="6">Belongs to the PA-phosphatase related phosphoesterase family.</text>
</comment>
<comment type="caution">
    <text evidence="1">Has no 2-lysophosphatidate/LPA phosphatase activity. This is supported by the fact that the phosphatase sequence motifs as well as the His residue acting as a nucleophile in active phosphatases of the PA-phosphatase related phosphoesterase family are not conserved.</text>
</comment>
<proteinExistence type="evidence at protein level"/>
<gene>
    <name evidence="8" type="primary">PLPPR1</name>
    <name evidence="5" type="synonym">LPPR1</name>
    <name type="synonym">PRG3</name>
</gene>
<reference key="1">
    <citation type="journal article" date="2004" name="Eur. J. Neurosci.">
        <title>Molecular cloning and expression regulation of PRG-3, a new member of the plasticity-related gene family.</title>
        <authorList>
            <person name="Savaskan N.E."/>
            <person name="Brauer A.U."/>
            <person name="Nitsch R."/>
        </authorList>
    </citation>
    <scope>NUCLEOTIDE SEQUENCE [MRNA]</scope>
</reference>
<reference key="2">
    <citation type="submission" date="2003-05" db="EMBL/GenBank/DDBJ databases">
        <title>Lipid phosphate phosphatase related proteins.</title>
        <authorList>
            <person name="Morris A.J."/>
            <person name="Sigal Y.J."/>
            <person name="McDermott M."/>
            <person name="Sciorra V.A."/>
        </authorList>
    </citation>
    <scope>NUCLEOTIDE SEQUENCE [MRNA]</scope>
</reference>
<reference key="3">
    <citation type="journal article" date="2004" name="Nat. Genet.">
        <title>Complete sequencing and characterization of 21,243 full-length human cDNAs.</title>
        <authorList>
            <person name="Ota T."/>
            <person name="Suzuki Y."/>
            <person name="Nishikawa T."/>
            <person name="Otsuki T."/>
            <person name="Sugiyama T."/>
            <person name="Irie R."/>
            <person name="Wakamatsu A."/>
            <person name="Hayashi K."/>
            <person name="Sato H."/>
            <person name="Nagai K."/>
            <person name="Kimura K."/>
            <person name="Makita H."/>
            <person name="Sekine M."/>
            <person name="Obayashi M."/>
            <person name="Nishi T."/>
            <person name="Shibahara T."/>
            <person name="Tanaka T."/>
            <person name="Ishii S."/>
            <person name="Yamamoto J."/>
            <person name="Saito K."/>
            <person name="Kawai Y."/>
            <person name="Isono Y."/>
            <person name="Nakamura Y."/>
            <person name="Nagahari K."/>
            <person name="Murakami K."/>
            <person name="Yasuda T."/>
            <person name="Iwayanagi T."/>
            <person name="Wagatsuma M."/>
            <person name="Shiratori A."/>
            <person name="Sudo H."/>
            <person name="Hosoiri T."/>
            <person name="Kaku Y."/>
            <person name="Kodaira H."/>
            <person name="Kondo H."/>
            <person name="Sugawara M."/>
            <person name="Takahashi M."/>
            <person name="Kanda K."/>
            <person name="Yokoi T."/>
            <person name="Furuya T."/>
            <person name="Kikkawa E."/>
            <person name="Omura Y."/>
            <person name="Abe K."/>
            <person name="Kamihara K."/>
            <person name="Katsuta N."/>
            <person name="Sato K."/>
            <person name="Tanikawa M."/>
            <person name="Yamazaki M."/>
            <person name="Ninomiya K."/>
            <person name="Ishibashi T."/>
            <person name="Yamashita H."/>
            <person name="Murakawa K."/>
            <person name="Fujimori K."/>
            <person name="Tanai H."/>
            <person name="Kimata M."/>
            <person name="Watanabe M."/>
            <person name="Hiraoka S."/>
            <person name="Chiba Y."/>
            <person name="Ishida S."/>
            <person name="Ono Y."/>
            <person name="Takiguchi S."/>
            <person name="Watanabe S."/>
            <person name="Yosida M."/>
            <person name="Hotuta T."/>
            <person name="Kusano J."/>
            <person name="Kanehori K."/>
            <person name="Takahashi-Fujii A."/>
            <person name="Hara H."/>
            <person name="Tanase T.-O."/>
            <person name="Nomura Y."/>
            <person name="Togiya S."/>
            <person name="Komai F."/>
            <person name="Hara R."/>
            <person name="Takeuchi K."/>
            <person name="Arita M."/>
            <person name="Imose N."/>
            <person name="Musashino K."/>
            <person name="Yuuki H."/>
            <person name="Oshima A."/>
            <person name="Sasaki N."/>
            <person name="Aotsuka S."/>
            <person name="Yoshikawa Y."/>
            <person name="Matsunawa H."/>
            <person name="Ichihara T."/>
            <person name="Shiohata N."/>
            <person name="Sano S."/>
            <person name="Moriya S."/>
            <person name="Momiyama H."/>
            <person name="Satoh N."/>
            <person name="Takami S."/>
            <person name="Terashima Y."/>
            <person name="Suzuki O."/>
            <person name="Nakagawa S."/>
            <person name="Senoh A."/>
            <person name="Mizoguchi H."/>
            <person name="Goto Y."/>
            <person name="Shimizu F."/>
            <person name="Wakebe H."/>
            <person name="Hishigaki H."/>
            <person name="Watanabe T."/>
            <person name="Sugiyama A."/>
            <person name="Takemoto M."/>
            <person name="Kawakami B."/>
            <person name="Yamazaki M."/>
            <person name="Watanabe K."/>
            <person name="Kumagai A."/>
            <person name="Itakura S."/>
            <person name="Fukuzumi Y."/>
            <person name="Fujimori Y."/>
            <person name="Komiyama M."/>
            <person name="Tashiro H."/>
            <person name="Tanigami A."/>
            <person name="Fujiwara T."/>
            <person name="Ono T."/>
            <person name="Yamada K."/>
            <person name="Fujii Y."/>
            <person name="Ozaki K."/>
            <person name="Hirao M."/>
            <person name="Ohmori Y."/>
            <person name="Kawabata A."/>
            <person name="Hikiji T."/>
            <person name="Kobatake N."/>
            <person name="Inagaki H."/>
            <person name="Ikema Y."/>
            <person name="Okamoto S."/>
            <person name="Okitani R."/>
            <person name="Kawakami T."/>
            <person name="Noguchi S."/>
            <person name="Itoh T."/>
            <person name="Shigeta K."/>
            <person name="Senba T."/>
            <person name="Matsumura K."/>
            <person name="Nakajima Y."/>
            <person name="Mizuno T."/>
            <person name="Morinaga M."/>
            <person name="Sasaki M."/>
            <person name="Togashi T."/>
            <person name="Oyama M."/>
            <person name="Hata H."/>
            <person name="Watanabe M."/>
            <person name="Komatsu T."/>
            <person name="Mizushima-Sugano J."/>
            <person name="Satoh T."/>
            <person name="Shirai Y."/>
            <person name="Takahashi Y."/>
            <person name="Nakagawa K."/>
            <person name="Okumura K."/>
            <person name="Nagase T."/>
            <person name="Nomura N."/>
            <person name="Kikuchi H."/>
            <person name="Masuho Y."/>
            <person name="Yamashita R."/>
            <person name="Nakai K."/>
            <person name="Yada T."/>
            <person name="Nakamura Y."/>
            <person name="Ohara O."/>
            <person name="Isogai T."/>
            <person name="Sugano S."/>
        </authorList>
    </citation>
    <scope>NUCLEOTIDE SEQUENCE [LARGE SCALE MRNA]</scope>
</reference>
<reference key="4">
    <citation type="journal article" date="2004" name="Nature">
        <title>DNA sequence and analysis of human chromosome 9.</title>
        <authorList>
            <person name="Humphray S.J."/>
            <person name="Oliver K."/>
            <person name="Hunt A.R."/>
            <person name="Plumb R.W."/>
            <person name="Loveland J.E."/>
            <person name="Howe K.L."/>
            <person name="Andrews T.D."/>
            <person name="Searle S."/>
            <person name="Hunt S.E."/>
            <person name="Scott C.E."/>
            <person name="Jones M.C."/>
            <person name="Ainscough R."/>
            <person name="Almeida J.P."/>
            <person name="Ambrose K.D."/>
            <person name="Ashwell R.I.S."/>
            <person name="Babbage A.K."/>
            <person name="Babbage S."/>
            <person name="Bagguley C.L."/>
            <person name="Bailey J."/>
            <person name="Banerjee R."/>
            <person name="Barker D.J."/>
            <person name="Barlow K.F."/>
            <person name="Bates K."/>
            <person name="Beasley H."/>
            <person name="Beasley O."/>
            <person name="Bird C.P."/>
            <person name="Bray-Allen S."/>
            <person name="Brown A.J."/>
            <person name="Brown J.Y."/>
            <person name="Burford D."/>
            <person name="Burrill W."/>
            <person name="Burton J."/>
            <person name="Carder C."/>
            <person name="Carter N.P."/>
            <person name="Chapman J.C."/>
            <person name="Chen Y."/>
            <person name="Clarke G."/>
            <person name="Clark S.Y."/>
            <person name="Clee C.M."/>
            <person name="Clegg S."/>
            <person name="Collier R.E."/>
            <person name="Corby N."/>
            <person name="Crosier M."/>
            <person name="Cummings A.T."/>
            <person name="Davies J."/>
            <person name="Dhami P."/>
            <person name="Dunn M."/>
            <person name="Dutta I."/>
            <person name="Dyer L.W."/>
            <person name="Earthrowl M.E."/>
            <person name="Faulkner L."/>
            <person name="Fleming C.J."/>
            <person name="Frankish A."/>
            <person name="Frankland J.A."/>
            <person name="French L."/>
            <person name="Fricker D.G."/>
            <person name="Garner P."/>
            <person name="Garnett J."/>
            <person name="Ghori J."/>
            <person name="Gilbert J.G.R."/>
            <person name="Glison C."/>
            <person name="Grafham D.V."/>
            <person name="Gribble S."/>
            <person name="Griffiths C."/>
            <person name="Griffiths-Jones S."/>
            <person name="Grocock R."/>
            <person name="Guy J."/>
            <person name="Hall R.E."/>
            <person name="Hammond S."/>
            <person name="Harley J.L."/>
            <person name="Harrison E.S.I."/>
            <person name="Hart E.A."/>
            <person name="Heath P.D."/>
            <person name="Henderson C.D."/>
            <person name="Hopkins B.L."/>
            <person name="Howard P.J."/>
            <person name="Howden P.J."/>
            <person name="Huckle E."/>
            <person name="Johnson C."/>
            <person name="Johnson D."/>
            <person name="Joy A.A."/>
            <person name="Kay M."/>
            <person name="Keenan S."/>
            <person name="Kershaw J.K."/>
            <person name="Kimberley A.M."/>
            <person name="King A."/>
            <person name="Knights A."/>
            <person name="Laird G.K."/>
            <person name="Langford C."/>
            <person name="Lawlor S."/>
            <person name="Leongamornlert D.A."/>
            <person name="Leversha M."/>
            <person name="Lloyd C."/>
            <person name="Lloyd D.M."/>
            <person name="Lovell J."/>
            <person name="Martin S."/>
            <person name="Mashreghi-Mohammadi M."/>
            <person name="Matthews L."/>
            <person name="McLaren S."/>
            <person name="McLay K.E."/>
            <person name="McMurray A."/>
            <person name="Milne S."/>
            <person name="Nickerson T."/>
            <person name="Nisbett J."/>
            <person name="Nordsiek G."/>
            <person name="Pearce A.V."/>
            <person name="Peck A.I."/>
            <person name="Porter K.M."/>
            <person name="Pandian R."/>
            <person name="Pelan S."/>
            <person name="Phillimore B."/>
            <person name="Povey S."/>
            <person name="Ramsey Y."/>
            <person name="Rand V."/>
            <person name="Scharfe M."/>
            <person name="Sehra H.K."/>
            <person name="Shownkeen R."/>
            <person name="Sims S.K."/>
            <person name="Skuce C.D."/>
            <person name="Smith M."/>
            <person name="Steward C.A."/>
            <person name="Swarbreck D."/>
            <person name="Sycamore N."/>
            <person name="Tester J."/>
            <person name="Thorpe A."/>
            <person name="Tracey A."/>
            <person name="Tromans A."/>
            <person name="Thomas D.W."/>
            <person name="Wall M."/>
            <person name="Wallis J.M."/>
            <person name="West A.P."/>
            <person name="Whitehead S.L."/>
            <person name="Willey D.L."/>
            <person name="Williams S.A."/>
            <person name="Wilming L."/>
            <person name="Wray P.W."/>
            <person name="Young L."/>
            <person name="Ashurst J.L."/>
            <person name="Coulson A."/>
            <person name="Blocker H."/>
            <person name="Durbin R.M."/>
            <person name="Sulston J.E."/>
            <person name="Hubbard T."/>
            <person name="Jackson M.J."/>
            <person name="Bentley D.R."/>
            <person name="Beck S."/>
            <person name="Rogers J."/>
            <person name="Dunham I."/>
        </authorList>
    </citation>
    <scope>NUCLEOTIDE SEQUENCE [LARGE SCALE GENOMIC DNA]</scope>
</reference>
<reference key="5">
    <citation type="submission" date="2005-07" db="EMBL/GenBank/DDBJ databases">
        <authorList>
            <person name="Mural R.J."/>
            <person name="Istrail S."/>
            <person name="Sutton G.G."/>
            <person name="Florea L."/>
            <person name="Halpern A.L."/>
            <person name="Mobarry C.M."/>
            <person name="Lippert R."/>
            <person name="Walenz B."/>
            <person name="Shatkay H."/>
            <person name="Dew I."/>
            <person name="Miller J.R."/>
            <person name="Flanigan M.J."/>
            <person name="Edwards N.J."/>
            <person name="Bolanos R."/>
            <person name="Fasulo D."/>
            <person name="Halldorsson B.V."/>
            <person name="Hannenhalli S."/>
            <person name="Turner R."/>
            <person name="Yooseph S."/>
            <person name="Lu F."/>
            <person name="Nusskern D.R."/>
            <person name="Shue B.C."/>
            <person name="Zheng X.H."/>
            <person name="Zhong F."/>
            <person name="Delcher A.L."/>
            <person name="Huson D.H."/>
            <person name="Kravitz S.A."/>
            <person name="Mouchard L."/>
            <person name="Reinert K."/>
            <person name="Remington K.A."/>
            <person name="Clark A.G."/>
            <person name="Waterman M.S."/>
            <person name="Eichler E.E."/>
            <person name="Adams M.D."/>
            <person name="Hunkapiller M.W."/>
            <person name="Myers E.W."/>
            <person name="Venter J.C."/>
        </authorList>
    </citation>
    <scope>NUCLEOTIDE SEQUENCE [LARGE SCALE GENOMIC DNA]</scope>
</reference>
<reference key="6">
    <citation type="journal article" date="2004" name="Genome Res.">
        <title>The status, quality, and expansion of the NIH full-length cDNA project: the Mammalian Gene Collection (MGC).</title>
        <authorList>
            <consortium name="The MGC Project Team"/>
        </authorList>
    </citation>
    <scope>NUCLEOTIDE SEQUENCE [LARGE SCALE MRNA]</scope>
    <source>
        <tissue>Brain</tissue>
    </source>
</reference>